<gene>
    <name evidence="1" type="primary">metK</name>
    <name type="ordered locus">Dde_1496</name>
</gene>
<protein>
    <recommendedName>
        <fullName evidence="1">S-adenosylmethionine synthase</fullName>
        <shortName evidence="1">AdoMet synthase</shortName>
        <ecNumber evidence="1">2.5.1.6</ecNumber>
    </recommendedName>
    <alternativeName>
        <fullName evidence="1">MAT</fullName>
    </alternativeName>
    <alternativeName>
        <fullName evidence="1">Methionine adenosyltransferase</fullName>
    </alternativeName>
</protein>
<sequence length="391" mass="42775">MIPYKGKYHFTSESVTEGHPDKVADQISDAVLDVLLEQDPDSRVACETMVTTGMAIIAGEITTRGYADLPQVVRDTIKEIGYNNSSMGFDWQTCAVLSSIDKQSPDIAQGVDRQDPENQGAGDQGMMFGFACDETPTLMPAPIFWAHQLSQKLTAVRKDGTVDFLRPDGKTQVSFEYVDGRPVRINNVVVSTQHAEQASQTDIIDAIRTHVIRPVLEPSGFFNEKDCEIFINTTGRFVIGGPMGDCGLTGRKIIQDTYGGMGSHGGGAFSGKDPSKVDRSGAYMGRYIAKNVVAAGLAPKCEVQIAYCIGVADPVSVLCTSLGSSDISDEVLTQAVRDVFDLRPYHISKRLDLRRPIYKKSACYGHFGREIPEFSWERTDAVDDLRAAARR</sequence>
<reference key="1">
    <citation type="journal article" date="2011" name="J. Bacteriol.">
        <title>Complete genome sequence and updated annotation of Desulfovibrio alaskensis G20.</title>
        <authorList>
            <person name="Hauser L.J."/>
            <person name="Land M.L."/>
            <person name="Brown S.D."/>
            <person name="Larimer F."/>
            <person name="Keller K.L."/>
            <person name="Rapp-Giles B.J."/>
            <person name="Price M.N."/>
            <person name="Lin M."/>
            <person name="Bruce D.C."/>
            <person name="Detter J.C."/>
            <person name="Tapia R."/>
            <person name="Han C.S."/>
            <person name="Goodwin L.A."/>
            <person name="Cheng J.F."/>
            <person name="Pitluck S."/>
            <person name="Copeland A."/>
            <person name="Lucas S."/>
            <person name="Nolan M."/>
            <person name="Lapidus A.L."/>
            <person name="Palumbo A.V."/>
            <person name="Wall J.D."/>
        </authorList>
    </citation>
    <scope>NUCLEOTIDE SEQUENCE [LARGE SCALE GENOMIC DNA]</scope>
    <source>
        <strain>ATCC BAA-1058 / DSM 17464 / G20</strain>
    </source>
</reference>
<feature type="chain" id="PRO_0000240993" description="S-adenosylmethionine synthase">
    <location>
        <begin position="1"/>
        <end position="391"/>
    </location>
</feature>
<feature type="region of interest" description="Flexible loop" evidence="1">
    <location>
        <begin position="103"/>
        <end position="113"/>
    </location>
</feature>
<feature type="binding site" description="in other chain" evidence="1">
    <location>
        <position position="19"/>
    </location>
    <ligand>
        <name>ATP</name>
        <dbReference type="ChEBI" id="CHEBI:30616"/>
        <note>ligand shared between two neighboring subunits</note>
    </ligand>
</feature>
<feature type="binding site" evidence="1">
    <location>
        <position position="21"/>
    </location>
    <ligand>
        <name>Mg(2+)</name>
        <dbReference type="ChEBI" id="CHEBI:18420"/>
    </ligand>
</feature>
<feature type="binding site" evidence="1">
    <location>
        <position position="47"/>
    </location>
    <ligand>
        <name>K(+)</name>
        <dbReference type="ChEBI" id="CHEBI:29103"/>
    </ligand>
</feature>
<feature type="binding site" description="in other chain" evidence="1">
    <location>
        <position position="60"/>
    </location>
    <ligand>
        <name>L-methionine</name>
        <dbReference type="ChEBI" id="CHEBI:57844"/>
        <note>ligand shared between two neighboring subunits</note>
    </ligand>
</feature>
<feature type="binding site" description="in other chain" evidence="1">
    <location>
        <position position="103"/>
    </location>
    <ligand>
        <name>L-methionine</name>
        <dbReference type="ChEBI" id="CHEBI:57844"/>
        <note>ligand shared between two neighboring subunits</note>
    </ligand>
</feature>
<feature type="binding site" description="in other chain" evidence="1">
    <location>
        <begin position="168"/>
        <end position="170"/>
    </location>
    <ligand>
        <name>ATP</name>
        <dbReference type="ChEBI" id="CHEBI:30616"/>
        <note>ligand shared between two neighboring subunits</note>
    </ligand>
</feature>
<feature type="binding site" description="in other chain" evidence="1">
    <location>
        <begin position="236"/>
        <end position="237"/>
    </location>
    <ligand>
        <name>ATP</name>
        <dbReference type="ChEBI" id="CHEBI:30616"/>
        <note>ligand shared between two neighboring subunits</note>
    </ligand>
</feature>
<feature type="binding site" evidence="1">
    <location>
        <position position="245"/>
    </location>
    <ligand>
        <name>ATP</name>
        <dbReference type="ChEBI" id="CHEBI:30616"/>
        <note>ligand shared between two neighboring subunits</note>
    </ligand>
</feature>
<feature type="binding site" evidence="1">
    <location>
        <position position="245"/>
    </location>
    <ligand>
        <name>L-methionine</name>
        <dbReference type="ChEBI" id="CHEBI:57844"/>
        <note>ligand shared between two neighboring subunits</note>
    </ligand>
</feature>
<feature type="binding site" description="in other chain" evidence="1">
    <location>
        <begin position="251"/>
        <end position="252"/>
    </location>
    <ligand>
        <name>ATP</name>
        <dbReference type="ChEBI" id="CHEBI:30616"/>
        <note>ligand shared between two neighboring subunits</note>
    </ligand>
</feature>
<feature type="binding site" evidence="1">
    <location>
        <position position="268"/>
    </location>
    <ligand>
        <name>ATP</name>
        <dbReference type="ChEBI" id="CHEBI:30616"/>
        <note>ligand shared between two neighboring subunits</note>
    </ligand>
</feature>
<feature type="binding site" evidence="1">
    <location>
        <position position="272"/>
    </location>
    <ligand>
        <name>ATP</name>
        <dbReference type="ChEBI" id="CHEBI:30616"/>
        <note>ligand shared between two neighboring subunits</note>
    </ligand>
</feature>
<feature type="binding site" description="in other chain" evidence="1">
    <location>
        <position position="276"/>
    </location>
    <ligand>
        <name>L-methionine</name>
        <dbReference type="ChEBI" id="CHEBI:57844"/>
        <note>ligand shared between two neighboring subunits</note>
    </ligand>
</feature>
<keyword id="KW-0067">ATP-binding</keyword>
<keyword id="KW-0963">Cytoplasm</keyword>
<keyword id="KW-0460">Magnesium</keyword>
<keyword id="KW-0479">Metal-binding</keyword>
<keyword id="KW-0547">Nucleotide-binding</keyword>
<keyword id="KW-0554">One-carbon metabolism</keyword>
<keyword id="KW-0630">Potassium</keyword>
<keyword id="KW-1185">Reference proteome</keyword>
<keyword id="KW-0808">Transferase</keyword>
<dbReference type="EC" id="2.5.1.6" evidence="1"/>
<dbReference type="EMBL" id="CP000112">
    <property type="protein sequence ID" value="ABB38295.1"/>
    <property type="molecule type" value="Genomic_DNA"/>
</dbReference>
<dbReference type="RefSeq" id="WP_011367461.1">
    <property type="nucleotide sequence ID" value="NC_007519.1"/>
</dbReference>
<dbReference type="SMR" id="Q311V1"/>
<dbReference type="STRING" id="207559.Dde_1496"/>
<dbReference type="KEGG" id="dde:Dde_1496"/>
<dbReference type="eggNOG" id="COG0192">
    <property type="taxonomic scope" value="Bacteria"/>
</dbReference>
<dbReference type="HOGENOM" id="CLU_041802_1_1_7"/>
<dbReference type="UniPathway" id="UPA00315">
    <property type="reaction ID" value="UER00080"/>
</dbReference>
<dbReference type="Proteomes" id="UP000002710">
    <property type="component" value="Chromosome"/>
</dbReference>
<dbReference type="GO" id="GO:0005737">
    <property type="term" value="C:cytoplasm"/>
    <property type="evidence" value="ECO:0007669"/>
    <property type="project" value="UniProtKB-SubCell"/>
</dbReference>
<dbReference type="GO" id="GO:0005524">
    <property type="term" value="F:ATP binding"/>
    <property type="evidence" value="ECO:0007669"/>
    <property type="project" value="UniProtKB-UniRule"/>
</dbReference>
<dbReference type="GO" id="GO:0000287">
    <property type="term" value="F:magnesium ion binding"/>
    <property type="evidence" value="ECO:0007669"/>
    <property type="project" value="UniProtKB-UniRule"/>
</dbReference>
<dbReference type="GO" id="GO:0004478">
    <property type="term" value="F:methionine adenosyltransferase activity"/>
    <property type="evidence" value="ECO:0007669"/>
    <property type="project" value="UniProtKB-UniRule"/>
</dbReference>
<dbReference type="GO" id="GO:0006730">
    <property type="term" value="P:one-carbon metabolic process"/>
    <property type="evidence" value="ECO:0007669"/>
    <property type="project" value="UniProtKB-KW"/>
</dbReference>
<dbReference type="GO" id="GO:0006556">
    <property type="term" value="P:S-adenosylmethionine biosynthetic process"/>
    <property type="evidence" value="ECO:0007669"/>
    <property type="project" value="UniProtKB-UniRule"/>
</dbReference>
<dbReference type="CDD" id="cd18079">
    <property type="entry name" value="S-AdoMet_synt"/>
    <property type="match status" value="1"/>
</dbReference>
<dbReference type="FunFam" id="3.30.300.10:FF:000003">
    <property type="entry name" value="S-adenosylmethionine synthase"/>
    <property type="match status" value="1"/>
</dbReference>
<dbReference type="Gene3D" id="3.30.300.10">
    <property type="match status" value="3"/>
</dbReference>
<dbReference type="HAMAP" id="MF_00086">
    <property type="entry name" value="S_AdoMet_synth1"/>
    <property type="match status" value="1"/>
</dbReference>
<dbReference type="InterPro" id="IPR022631">
    <property type="entry name" value="ADOMET_SYNTHASE_CS"/>
</dbReference>
<dbReference type="InterPro" id="IPR022630">
    <property type="entry name" value="S-AdoMet_synt_C"/>
</dbReference>
<dbReference type="InterPro" id="IPR022629">
    <property type="entry name" value="S-AdoMet_synt_central"/>
</dbReference>
<dbReference type="InterPro" id="IPR022628">
    <property type="entry name" value="S-AdoMet_synt_N"/>
</dbReference>
<dbReference type="InterPro" id="IPR002133">
    <property type="entry name" value="S-AdoMet_synthetase"/>
</dbReference>
<dbReference type="InterPro" id="IPR022636">
    <property type="entry name" value="S-AdoMet_synthetase_sfam"/>
</dbReference>
<dbReference type="NCBIfam" id="TIGR01034">
    <property type="entry name" value="metK"/>
    <property type="match status" value="1"/>
</dbReference>
<dbReference type="PANTHER" id="PTHR11964">
    <property type="entry name" value="S-ADENOSYLMETHIONINE SYNTHETASE"/>
    <property type="match status" value="1"/>
</dbReference>
<dbReference type="Pfam" id="PF02773">
    <property type="entry name" value="S-AdoMet_synt_C"/>
    <property type="match status" value="1"/>
</dbReference>
<dbReference type="Pfam" id="PF02772">
    <property type="entry name" value="S-AdoMet_synt_M"/>
    <property type="match status" value="1"/>
</dbReference>
<dbReference type="Pfam" id="PF00438">
    <property type="entry name" value="S-AdoMet_synt_N"/>
    <property type="match status" value="1"/>
</dbReference>
<dbReference type="PIRSF" id="PIRSF000497">
    <property type="entry name" value="MAT"/>
    <property type="match status" value="1"/>
</dbReference>
<dbReference type="SUPFAM" id="SSF55973">
    <property type="entry name" value="S-adenosylmethionine synthetase"/>
    <property type="match status" value="3"/>
</dbReference>
<dbReference type="PROSITE" id="PS00376">
    <property type="entry name" value="ADOMET_SYNTHASE_1"/>
    <property type="match status" value="1"/>
</dbReference>
<dbReference type="PROSITE" id="PS00377">
    <property type="entry name" value="ADOMET_SYNTHASE_2"/>
    <property type="match status" value="1"/>
</dbReference>
<comment type="function">
    <text evidence="1">Catalyzes the formation of S-adenosylmethionine (AdoMet) from methionine and ATP. The overall synthetic reaction is composed of two sequential steps, AdoMet formation and the subsequent tripolyphosphate hydrolysis which occurs prior to release of AdoMet from the enzyme.</text>
</comment>
<comment type="catalytic activity">
    <reaction evidence="1">
        <text>L-methionine + ATP + H2O = S-adenosyl-L-methionine + phosphate + diphosphate</text>
        <dbReference type="Rhea" id="RHEA:21080"/>
        <dbReference type="ChEBI" id="CHEBI:15377"/>
        <dbReference type="ChEBI" id="CHEBI:30616"/>
        <dbReference type="ChEBI" id="CHEBI:33019"/>
        <dbReference type="ChEBI" id="CHEBI:43474"/>
        <dbReference type="ChEBI" id="CHEBI:57844"/>
        <dbReference type="ChEBI" id="CHEBI:59789"/>
        <dbReference type="EC" id="2.5.1.6"/>
    </reaction>
</comment>
<comment type="cofactor">
    <cofactor evidence="1">
        <name>Mg(2+)</name>
        <dbReference type="ChEBI" id="CHEBI:18420"/>
    </cofactor>
    <text evidence="1">Binds 2 divalent ions per subunit.</text>
</comment>
<comment type="cofactor">
    <cofactor evidence="1">
        <name>K(+)</name>
        <dbReference type="ChEBI" id="CHEBI:29103"/>
    </cofactor>
    <text evidence="1">Binds 1 potassium ion per subunit.</text>
</comment>
<comment type="pathway">
    <text evidence="1">Amino-acid biosynthesis; S-adenosyl-L-methionine biosynthesis; S-adenosyl-L-methionine from L-methionine: step 1/1.</text>
</comment>
<comment type="subunit">
    <text evidence="1">Homotetramer; dimer of dimers.</text>
</comment>
<comment type="subcellular location">
    <subcellularLocation>
        <location evidence="1">Cytoplasm</location>
    </subcellularLocation>
</comment>
<comment type="similarity">
    <text evidence="1">Belongs to the AdoMet synthase family.</text>
</comment>
<name>METK_OLEA2</name>
<evidence type="ECO:0000255" key="1">
    <source>
        <dbReference type="HAMAP-Rule" id="MF_00086"/>
    </source>
</evidence>
<accession>Q311V1</accession>
<organism>
    <name type="scientific">Oleidesulfovibrio alaskensis (strain ATCC BAA-1058 / DSM 17464 / G20)</name>
    <name type="common">Desulfovibrio alaskensis</name>
    <dbReference type="NCBI Taxonomy" id="207559"/>
    <lineage>
        <taxon>Bacteria</taxon>
        <taxon>Pseudomonadati</taxon>
        <taxon>Thermodesulfobacteriota</taxon>
        <taxon>Desulfovibrionia</taxon>
        <taxon>Desulfovibrionales</taxon>
        <taxon>Desulfovibrionaceae</taxon>
        <taxon>Oleidesulfovibrio</taxon>
    </lineage>
</organism>
<proteinExistence type="inferred from homology"/>